<gene>
    <name type="ordered locus">Shewana3_3908</name>
</gene>
<organism>
    <name type="scientific">Shewanella sp. (strain ANA-3)</name>
    <dbReference type="NCBI Taxonomy" id="94122"/>
    <lineage>
        <taxon>Bacteria</taxon>
        <taxon>Pseudomonadati</taxon>
        <taxon>Pseudomonadota</taxon>
        <taxon>Gammaproteobacteria</taxon>
        <taxon>Alteromonadales</taxon>
        <taxon>Shewanellaceae</taxon>
        <taxon>Shewanella</taxon>
    </lineage>
</organism>
<reference key="1">
    <citation type="submission" date="2006-09" db="EMBL/GenBank/DDBJ databases">
        <title>Complete sequence of chromosome 1 of Shewanella sp. ANA-3.</title>
        <authorList>
            <person name="Copeland A."/>
            <person name="Lucas S."/>
            <person name="Lapidus A."/>
            <person name="Barry K."/>
            <person name="Detter J.C."/>
            <person name="Glavina del Rio T."/>
            <person name="Hammon N."/>
            <person name="Israni S."/>
            <person name="Dalin E."/>
            <person name="Tice H."/>
            <person name="Pitluck S."/>
            <person name="Chertkov O."/>
            <person name="Brettin T."/>
            <person name="Bruce D."/>
            <person name="Han C."/>
            <person name="Tapia R."/>
            <person name="Gilna P."/>
            <person name="Schmutz J."/>
            <person name="Larimer F."/>
            <person name="Land M."/>
            <person name="Hauser L."/>
            <person name="Kyrpides N."/>
            <person name="Kim E."/>
            <person name="Newman D."/>
            <person name="Salticov C."/>
            <person name="Konstantinidis K."/>
            <person name="Klappenback J."/>
            <person name="Tiedje J."/>
            <person name="Richardson P."/>
        </authorList>
    </citation>
    <scope>NUCLEOTIDE SEQUENCE [LARGE SCALE GENOMIC DNA]</scope>
    <source>
        <strain>ANA-3</strain>
    </source>
</reference>
<accession>A0L257</accession>
<name>CINAL_SHESA</name>
<feature type="chain" id="PRO_1000058724" description="CinA-like protein">
    <location>
        <begin position="1"/>
        <end position="425"/>
    </location>
</feature>
<protein>
    <recommendedName>
        <fullName evidence="1">CinA-like protein</fullName>
    </recommendedName>
</protein>
<sequence length="425" mass="46436">MMKLEMICTGEEVLSGQIVDTNAAWFASTMMEHGIEIQRRVTVGDRLEDLIAVFQERSLHADVILVNGGLGPTSDDMSAEAMAKAKGESLVENREWRQHLEDWFTRNNREMPVSNLKQAMLPESAVMVDNPVGTACGFRVKLNRAWLFFTPGVPFELKHMVKEQFIPFIREEFDLDAKVALKKLLTIGHGESSLADKIEPLELPEGITIGYRSSMPHIEIKIFARGEKAIALLPRVTGHIKMVLGTAVVAEDKATLAEEIHTKLLNSGLTLSVAESCTGGMITSQLVDFPGSSSYLQHGLVTYSNESKVRVLGVNPATLDDHGAVSIPTVEEMAKGARAILDSDFALATSGIAGPDGGTEEKPVGTVAIALATRSGVYSQMIKLPRRSRDLVRSLSAAVAYDMLRRELLTEAVIVDYQSIGRFSK</sequence>
<dbReference type="EMBL" id="CP000469">
    <property type="protein sequence ID" value="ABK50126.1"/>
    <property type="molecule type" value="Genomic_DNA"/>
</dbReference>
<dbReference type="SMR" id="A0L257"/>
<dbReference type="STRING" id="94122.Shewana3_3908"/>
<dbReference type="KEGG" id="shn:Shewana3_3908"/>
<dbReference type="eggNOG" id="COG1058">
    <property type="taxonomic scope" value="Bacteria"/>
</dbReference>
<dbReference type="eggNOG" id="COG1546">
    <property type="taxonomic scope" value="Bacteria"/>
</dbReference>
<dbReference type="HOGENOM" id="CLU_030805_9_2_6"/>
<dbReference type="Proteomes" id="UP000002589">
    <property type="component" value="Chromosome"/>
</dbReference>
<dbReference type="CDD" id="cd00885">
    <property type="entry name" value="cinA"/>
    <property type="match status" value="1"/>
</dbReference>
<dbReference type="Gene3D" id="3.90.950.20">
    <property type="entry name" value="CinA-like"/>
    <property type="match status" value="1"/>
</dbReference>
<dbReference type="Gene3D" id="3.40.980.10">
    <property type="entry name" value="MoaB/Mog-like domain"/>
    <property type="match status" value="1"/>
</dbReference>
<dbReference type="HAMAP" id="MF_00226_B">
    <property type="entry name" value="CinA_B"/>
    <property type="match status" value="1"/>
</dbReference>
<dbReference type="InterPro" id="IPR050101">
    <property type="entry name" value="CinA"/>
</dbReference>
<dbReference type="InterPro" id="IPR036653">
    <property type="entry name" value="CinA-like_C"/>
</dbReference>
<dbReference type="InterPro" id="IPR008136">
    <property type="entry name" value="CinA_C"/>
</dbReference>
<dbReference type="InterPro" id="IPR008135">
    <property type="entry name" value="Competence-induced_CinA"/>
</dbReference>
<dbReference type="InterPro" id="IPR036425">
    <property type="entry name" value="MoaB/Mog-like_dom_sf"/>
</dbReference>
<dbReference type="InterPro" id="IPR001453">
    <property type="entry name" value="MoaB/Mog_dom"/>
</dbReference>
<dbReference type="NCBIfam" id="TIGR00200">
    <property type="entry name" value="cinA_nterm"/>
    <property type="match status" value="1"/>
</dbReference>
<dbReference type="NCBIfam" id="TIGR00177">
    <property type="entry name" value="molyb_syn"/>
    <property type="match status" value="1"/>
</dbReference>
<dbReference type="NCBIfam" id="TIGR00199">
    <property type="entry name" value="PncC_domain"/>
    <property type="match status" value="1"/>
</dbReference>
<dbReference type="PANTHER" id="PTHR13939">
    <property type="entry name" value="NICOTINAMIDE-NUCLEOTIDE AMIDOHYDROLASE PNCC"/>
    <property type="match status" value="1"/>
</dbReference>
<dbReference type="PANTHER" id="PTHR13939:SF0">
    <property type="entry name" value="NMN AMIDOHYDROLASE-LIKE PROTEIN YFAY"/>
    <property type="match status" value="1"/>
</dbReference>
<dbReference type="Pfam" id="PF02464">
    <property type="entry name" value="CinA"/>
    <property type="match status" value="1"/>
</dbReference>
<dbReference type="Pfam" id="PF00994">
    <property type="entry name" value="MoCF_biosynth"/>
    <property type="match status" value="1"/>
</dbReference>
<dbReference type="PIRSF" id="PIRSF006728">
    <property type="entry name" value="CinA"/>
    <property type="match status" value="1"/>
</dbReference>
<dbReference type="SMART" id="SM00852">
    <property type="entry name" value="MoCF_biosynth"/>
    <property type="match status" value="1"/>
</dbReference>
<dbReference type="SUPFAM" id="SSF142433">
    <property type="entry name" value="CinA-like"/>
    <property type="match status" value="1"/>
</dbReference>
<dbReference type="SUPFAM" id="SSF53218">
    <property type="entry name" value="Molybdenum cofactor biosynthesis proteins"/>
    <property type="match status" value="1"/>
</dbReference>
<proteinExistence type="inferred from homology"/>
<comment type="similarity">
    <text evidence="1">Belongs to the CinA family.</text>
</comment>
<evidence type="ECO:0000255" key="1">
    <source>
        <dbReference type="HAMAP-Rule" id="MF_00226"/>
    </source>
</evidence>